<keyword id="KW-0175">Coiled coil</keyword>
<keyword id="KW-0403">Intermediate filament</keyword>
<keyword id="KW-0416">Keratin</keyword>
<keyword id="KW-1267">Proteomics identification</keyword>
<keyword id="KW-1185">Reference proteome</keyword>
<sequence>MDTKGCTTTNSPSTPCQNCSRITNVSTISSNNGCHPGGLTVNNCQPAGHVLRIPWDQGCQPTPRFCRKPIYLMNNFNARFSLDDCSWYGEGINSNEKETMQILNERLANYLQKVRMLERENAELESKIQEESNKELPVLCPDYLSYYTTIEELQQKILCTKAENSRLVSQIDNTKLTADDLRAKYEAEVSLRQLVESDANGLKQILNVLTLGKADLEAQVQSLKEELLCLKNNHKEEINSLQCQLGERLDIEVTAAPSADLNQVLQEMRCQYEPIMETNRKDVEQWFNTQIEELNQQVVTSSQQQQCCQKEIIELRRSVNTLEVELQAQHRMRDSQECILTETEARYTALLTQIQSLIDNLEAQLAEIRCALERQNQEYEILLDVKSRLECEITTYRSLLESSDGKRPCYPRATKCEPSPWTSCKSGAIESTAPACTSSSPCSLKEHCSACGPLSRILVKICTITKEIKDGKVISSYEHVQPCFIIRPAKV</sequence>
<reference key="1">
    <citation type="journal article" date="2004" name="Differentiation">
        <title>The human type I keratin gene family: characterization of new hair follicle specific members and evaluation of the chromosome 17q21.2 gene domain.</title>
        <authorList>
            <person name="Rogers M.A."/>
            <person name="Winter H."/>
            <person name="Langbein L."/>
            <person name="Bleiler R."/>
            <person name="Schweizer J."/>
        </authorList>
    </citation>
    <scope>NUCLEOTIDE SEQUENCE [MRNA]</scope>
    <scope>TISSUE SPECIFICITY</scope>
    <scope>VARIANT GLN-456</scope>
    <source>
        <tissue>Scalp</tissue>
    </source>
</reference>
<reference key="2">
    <citation type="journal article" date="2006" name="Nature">
        <title>DNA sequence of human chromosome 17 and analysis of rearrangement in the human lineage.</title>
        <authorList>
            <person name="Zody M.C."/>
            <person name="Garber M."/>
            <person name="Adams D.J."/>
            <person name="Sharpe T."/>
            <person name="Harrow J."/>
            <person name="Lupski J.R."/>
            <person name="Nicholson C."/>
            <person name="Searle S.M."/>
            <person name="Wilming L."/>
            <person name="Young S.K."/>
            <person name="Abouelleil A."/>
            <person name="Allen N.R."/>
            <person name="Bi W."/>
            <person name="Bloom T."/>
            <person name="Borowsky M.L."/>
            <person name="Bugalter B.E."/>
            <person name="Butler J."/>
            <person name="Chang J.L."/>
            <person name="Chen C.-K."/>
            <person name="Cook A."/>
            <person name="Corum B."/>
            <person name="Cuomo C.A."/>
            <person name="de Jong P.J."/>
            <person name="DeCaprio D."/>
            <person name="Dewar K."/>
            <person name="FitzGerald M."/>
            <person name="Gilbert J."/>
            <person name="Gibson R."/>
            <person name="Gnerre S."/>
            <person name="Goldstein S."/>
            <person name="Grafham D.V."/>
            <person name="Grocock R."/>
            <person name="Hafez N."/>
            <person name="Hagopian D.S."/>
            <person name="Hart E."/>
            <person name="Norman C.H."/>
            <person name="Humphray S."/>
            <person name="Jaffe D.B."/>
            <person name="Jones M."/>
            <person name="Kamal M."/>
            <person name="Khodiyar V.K."/>
            <person name="LaButti K."/>
            <person name="Laird G."/>
            <person name="Lehoczky J."/>
            <person name="Liu X."/>
            <person name="Lokyitsang T."/>
            <person name="Loveland J."/>
            <person name="Lui A."/>
            <person name="Macdonald P."/>
            <person name="Major J.E."/>
            <person name="Matthews L."/>
            <person name="Mauceli E."/>
            <person name="McCarroll S.A."/>
            <person name="Mihalev A.H."/>
            <person name="Mudge J."/>
            <person name="Nguyen C."/>
            <person name="Nicol R."/>
            <person name="O'Leary S.B."/>
            <person name="Osoegawa K."/>
            <person name="Schwartz D.C."/>
            <person name="Shaw-Smith C."/>
            <person name="Stankiewicz P."/>
            <person name="Steward C."/>
            <person name="Swarbreck D."/>
            <person name="Venkataraman V."/>
            <person name="Whittaker C.A."/>
            <person name="Yang X."/>
            <person name="Zimmer A.R."/>
            <person name="Bradley A."/>
            <person name="Hubbard T."/>
            <person name="Birren B.W."/>
            <person name="Rogers J."/>
            <person name="Lander E.S."/>
            <person name="Nusbaum C."/>
        </authorList>
    </citation>
    <scope>NUCLEOTIDE SEQUENCE [LARGE SCALE GENOMIC DNA]</scope>
</reference>
<reference key="3">
    <citation type="journal article" date="2004" name="Genome Res.">
        <title>The status, quality, and expansion of the NIH full-length cDNA project: the Mammalian Gene Collection (MGC).</title>
        <authorList>
            <consortium name="The MGC Project Team"/>
        </authorList>
    </citation>
    <scope>NUCLEOTIDE SEQUENCE [LARGE SCALE MRNA]</scope>
    <scope>VARIANT GLN-456</scope>
</reference>
<reference key="4">
    <citation type="journal article" date="2004" name="Eur. J. Cell Biol.">
        <title>Comprehensive analysis of keratin gene clusters in humans and rodents.</title>
        <authorList>
            <person name="Hesse M."/>
            <person name="Zimek A."/>
            <person name="Weber K."/>
            <person name="Magin T.M."/>
        </authorList>
    </citation>
    <scope>IDENTIFICATION</scope>
</reference>
<reference key="5">
    <citation type="journal article" date="2007" name="J. Invest. Dermatol.">
        <title>Novel type I hair keratins K39 and K40 are the last to be expressed in differentiation of the hair: completion of the human hair keratin catalog.</title>
        <authorList>
            <person name="Langbein L."/>
            <person name="Rogers M.A."/>
            <person name="Praetzel-Wunder S."/>
            <person name="Boeckler D."/>
            <person name="Schirmacher P."/>
            <person name="Schweizer J."/>
        </authorList>
    </citation>
    <scope>POSSIBLE FUNCTION</scope>
    <scope>TISSUE SPECIFICITY</scope>
    <scope>DEVELOPMENTAL STAGE</scope>
</reference>
<dbReference type="EMBL" id="AJ786657">
    <property type="protein sequence ID" value="CAH10352.1"/>
    <property type="molecule type" value="mRNA"/>
</dbReference>
<dbReference type="EMBL" id="AC004231">
    <property type="status" value="NOT_ANNOTATED_CDS"/>
    <property type="molecule type" value="Genomic_DNA"/>
</dbReference>
<dbReference type="EMBL" id="AC007455">
    <property type="status" value="NOT_ANNOTATED_CDS"/>
    <property type="molecule type" value="Genomic_DNA"/>
</dbReference>
<dbReference type="EMBL" id="BC157887">
    <property type="protein sequence ID" value="AAI57888.1"/>
    <property type="molecule type" value="mRNA"/>
</dbReference>
<dbReference type="EMBL" id="BK004054">
    <property type="protein sequence ID" value="DAA04487.1"/>
    <property type="molecule type" value="mRNA"/>
</dbReference>
<dbReference type="CCDS" id="CCDS11382.1"/>
<dbReference type="RefSeq" id="NP_998821.3">
    <property type="nucleotide sequence ID" value="NM_213656.4"/>
</dbReference>
<dbReference type="SMR" id="Q6A163"/>
<dbReference type="BioGRID" id="133686">
    <property type="interactions" value="61"/>
</dbReference>
<dbReference type="FunCoup" id="Q6A163">
    <property type="interactions" value="154"/>
</dbReference>
<dbReference type="IntAct" id="Q6A163">
    <property type="interactions" value="55"/>
</dbReference>
<dbReference type="STRING" id="9606.ENSP00000347823"/>
<dbReference type="GlyGen" id="Q6A163">
    <property type="glycosylation" value="1 site, 1 O-linked glycan (1 site)"/>
</dbReference>
<dbReference type="iPTMnet" id="Q6A163"/>
<dbReference type="PhosphoSitePlus" id="Q6A163"/>
<dbReference type="SwissPalm" id="Q6A163"/>
<dbReference type="BioMuta" id="KRT39"/>
<dbReference type="DMDM" id="166218816"/>
<dbReference type="jPOST" id="Q6A163"/>
<dbReference type="MassIVE" id="Q6A163"/>
<dbReference type="PaxDb" id="9606-ENSP00000347823"/>
<dbReference type="PeptideAtlas" id="Q6A163"/>
<dbReference type="ProteomicsDB" id="66177"/>
<dbReference type="Antibodypedia" id="55323">
    <property type="antibodies" value="28 antibodies from 9 providers"/>
</dbReference>
<dbReference type="DNASU" id="390792"/>
<dbReference type="Ensembl" id="ENST00000355612.7">
    <property type="protein sequence ID" value="ENSP00000347823.2"/>
    <property type="gene ID" value="ENSG00000196859.8"/>
</dbReference>
<dbReference type="Ensembl" id="ENST00000575391.5">
    <property type="protein sequence ID" value="ENSP00000459016.1"/>
    <property type="gene ID" value="ENSG00000262164.6"/>
</dbReference>
<dbReference type="GeneID" id="390792"/>
<dbReference type="KEGG" id="hsa:390792"/>
<dbReference type="MANE-Select" id="ENST00000355612.7">
    <property type="protein sequence ID" value="ENSP00000347823.2"/>
    <property type="RefSeq nucleotide sequence ID" value="NM_213656.4"/>
    <property type="RefSeq protein sequence ID" value="NP_998821.3"/>
</dbReference>
<dbReference type="UCSC" id="uc002hvo.1">
    <property type="organism name" value="human"/>
</dbReference>
<dbReference type="AGR" id="HGNC:32971"/>
<dbReference type="CTD" id="390792"/>
<dbReference type="DisGeNET" id="390792"/>
<dbReference type="GeneCards" id="KRT39"/>
<dbReference type="HGNC" id="HGNC:32971">
    <property type="gene designation" value="KRT39"/>
</dbReference>
<dbReference type="HPA" id="ENSG00000196859">
    <property type="expression patterns" value="Tissue enriched (skin)"/>
</dbReference>
<dbReference type="MIM" id="616678">
    <property type="type" value="gene"/>
</dbReference>
<dbReference type="neXtProt" id="NX_Q6A163"/>
<dbReference type="OpenTargets" id="ENSG00000196859"/>
<dbReference type="PharmGKB" id="PA147357633"/>
<dbReference type="VEuPathDB" id="HostDB:ENSG00000196859"/>
<dbReference type="eggNOG" id="ENOG502SH7Y">
    <property type="taxonomic scope" value="Eukaryota"/>
</dbReference>
<dbReference type="GeneTree" id="ENSGT00940000162203"/>
<dbReference type="HOGENOM" id="CLU_012560_8_0_1"/>
<dbReference type="InParanoid" id="Q6A163"/>
<dbReference type="OMA" id="PCATKCE"/>
<dbReference type="OrthoDB" id="9447454at2759"/>
<dbReference type="PAN-GO" id="Q6A163">
    <property type="GO annotations" value="3 GO annotations based on evolutionary models"/>
</dbReference>
<dbReference type="PhylomeDB" id="Q6A163"/>
<dbReference type="TreeFam" id="TF332742"/>
<dbReference type="PathwayCommons" id="Q6A163"/>
<dbReference type="Reactome" id="R-HSA-6805567">
    <property type="pathway name" value="Keratinization"/>
</dbReference>
<dbReference type="Reactome" id="R-HSA-6809371">
    <property type="pathway name" value="Formation of the cornified envelope"/>
</dbReference>
<dbReference type="SignaLink" id="Q6A163"/>
<dbReference type="BioGRID-ORCS" id="390792">
    <property type="hits" value="6 hits in 1145 CRISPR screens"/>
</dbReference>
<dbReference type="GenomeRNAi" id="390792"/>
<dbReference type="Pharos" id="Q6A163">
    <property type="development level" value="Tdark"/>
</dbReference>
<dbReference type="PRO" id="PR:Q6A163"/>
<dbReference type="Proteomes" id="UP000005640">
    <property type="component" value="Chromosome 17"/>
</dbReference>
<dbReference type="RNAct" id="Q6A163">
    <property type="molecule type" value="protein"/>
</dbReference>
<dbReference type="Bgee" id="ENSG00000196859">
    <property type="expression patterns" value="Expressed in male germ line stem cell (sensu Vertebrata) in testis and 35 other cell types or tissues"/>
</dbReference>
<dbReference type="ExpressionAtlas" id="Q6A163">
    <property type="expression patterns" value="baseline and differential"/>
</dbReference>
<dbReference type="GO" id="GO:0005856">
    <property type="term" value="C:cytoskeleton"/>
    <property type="evidence" value="ECO:0000318"/>
    <property type="project" value="GO_Central"/>
</dbReference>
<dbReference type="GO" id="GO:0005829">
    <property type="term" value="C:cytosol"/>
    <property type="evidence" value="ECO:0000304"/>
    <property type="project" value="Reactome"/>
</dbReference>
<dbReference type="GO" id="GO:0005882">
    <property type="term" value="C:intermediate filament"/>
    <property type="evidence" value="ECO:0007669"/>
    <property type="project" value="UniProtKB-KW"/>
</dbReference>
<dbReference type="GO" id="GO:0005198">
    <property type="term" value="F:structural molecule activity"/>
    <property type="evidence" value="ECO:0007669"/>
    <property type="project" value="InterPro"/>
</dbReference>
<dbReference type="GO" id="GO:0030855">
    <property type="term" value="P:epithelial cell differentiation"/>
    <property type="evidence" value="ECO:0000318"/>
    <property type="project" value="GO_Central"/>
</dbReference>
<dbReference type="GO" id="GO:0045109">
    <property type="term" value="P:intermediate filament organization"/>
    <property type="evidence" value="ECO:0000318"/>
    <property type="project" value="GO_Central"/>
</dbReference>
<dbReference type="FunFam" id="1.20.5.1160:FF:000002">
    <property type="entry name" value="Type I keratin 10"/>
    <property type="match status" value="1"/>
</dbReference>
<dbReference type="FunFam" id="1.20.5.170:FF:000002">
    <property type="entry name" value="Type I keratin KA11"/>
    <property type="match status" value="1"/>
</dbReference>
<dbReference type="FunFam" id="1.20.5.500:FF:000001">
    <property type="entry name" value="Type II keratin 23"/>
    <property type="match status" value="1"/>
</dbReference>
<dbReference type="Gene3D" id="1.20.5.170">
    <property type="match status" value="1"/>
</dbReference>
<dbReference type="Gene3D" id="1.20.5.500">
    <property type="entry name" value="Single helix bin"/>
    <property type="match status" value="1"/>
</dbReference>
<dbReference type="Gene3D" id="1.20.5.1160">
    <property type="entry name" value="Vasodilator-stimulated phosphoprotein"/>
    <property type="match status" value="1"/>
</dbReference>
<dbReference type="InterPro" id="IPR018039">
    <property type="entry name" value="IF_conserved"/>
</dbReference>
<dbReference type="InterPro" id="IPR039008">
    <property type="entry name" value="IF_rod_dom"/>
</dbReference>
<dbReference type="InterPro" id="IPR002957">
    <property type="entry name" value="Keratin_I"/>
</dbReference>
<dbReference type="PANTHER" id="PTHR23239">
    <property type="entry name" value="INTERMEDIATE FILAMENT"/>
    <property type="match status" value="1"/>
</dbReference>
<dbReference type="PANTHER" id="PTHR23239:SF106">
    <property type="entry name" value="KERATIN, TYPE I CYTOSKELETAL 39"/>
    <property type="match status" value="1"/>
</dbReference>
<dbReference type="Pfam" id="PF00038">
    <property type="entry name" value="Filament"/>
    <property type="match status" value="1"/>
</dbReference>
<dbReference type="PRINTS" id="PR01248">
    <property type="entry name" value="TYPE1KERATIN"/>
</dbReference>
<dbReference type="SMART" id="SM01391">
    <property type="entry name" value="Filament"/>
    <property type="match status" value="1"/>
</dbReference>
<dbReference type="SUPFAM" id="SSF64593">
    <property type="entry name" value="Intermediate filament protein, coiled coil region"/>
    <property type="match status" value="2"/>
</dbReference>
<dbReference type="PROSITE" id="PS00226">
    <property type="entry name" value="IF_ROD_1"/>
    <property type="match status" value="1"/>
</dbReference>
<dbReference type="PROSITE" id="PS51842">
    <property type="entry name" value="IF_ROD_2"/>
    <property type="match status" value="1"/>
</dbReference>
<comment type="function">
    <text>May play a role in late hair differentiation.</text>
</comment>
<comment type="subunit">
    <text>Heterotetramer of two type I and two type II keratins.</text>
</comment>
<comment type="interaction">
    <interactant intactId="EBI-11958242">
        <id>Q6A163</id>
    </interactant>
    <interactant intactId="EBI-11954519">
        <id>Q49AR9</id>
        <label>ANKS1A</label>
    </interactant>
    <organismsDiffer>false</organismsDiffer>
    <experiments>3</experiments>
</comment>
<comment type="interaction">
    <interactant intactId="EBI-11958242">
        <id>Q6A163</id>
    </interactant>
    <interactant intactId="EBI-742909">
        <id>Q9H6L4</id>
        <label>ARMC7</label>
    </interactant>
    <organismsDiffer>false</organismsDiffer>
    <experiments>3</experiments>
</comment>
<comment type="interaction">
    <interactant intactId="EBI-11958242">
        <id>Q6A163</id>
    </interactant>
    <interactant intactId="EBI-745073">
        <id>Q9BXY8</id>
        <label>BEX2</label>
    </interactant>
    <organismsDiffer>false</organismsDiffer>
    <experiments>3</experiments>
</comment>
<comment type="interaction">
    <interactant intactId="EBI-11958242">
        <id>Q6A163</id>
    </interactant>
    <interactant intactId="EBI-747505">
        <id>Q8TAB5</id>
        <label>C1orf216</label>
    </interactant>
    <organismsDiffer>false</organismsDiffer>
    <experiments>3</experiments>
</comment>
<comment type="interaction">
    <interactant intactId="EBI-11958242">
        <id>Q6A163</id>
    </interactant>
    <interactant intactId="EBI-10181422">
        <id>A0A1B0GWI1</id>
        <label>CCDC196</label>
    </interactant>
    <organismsDiffer>false</organismsDiffer>
    <experiments>3</experiments>
</comment>
<comment type="interaction">
    <interactant intactId="EBI-11958242">
        <id>Q6A163</id>
    </interactant>
    <interactant intactId="EBI-11980535">
        <id>P51800-3</id>
        <label>CLCNKA</label>
    </interactant>
    <organismsDiffer>false</organismsDiffer>
    <experiments>3</experiments>
</comment>
<comment type="interaction">
    <interactant intactId="EBI-11958242">
        <id>Q6A163</id>
    </interactant>
    <interactant intactId="EBI-1752811">
        <id>Q9BQ89</id>
        <label>FAM110A</label>
    </interactant>
    <organismsDiffer>false</organismsDiffer>
    <experiments>3</experiments>
</comment>
<comment type="interaction">
    <interactant intactId="EBI-11958242">
        <id>Q6A163</id>
    </interactant>
    <interactant intactId="EBI-744302">
        <id>P14136</id>
        <label>GFAP</label>
    </interactant>
    <organismsDiffer>false</organismsDiffer>
    <experiments>3</experiments>
</comment>
<comment type="interaction">
    <interactant intactId="EBI-11958242">
        <id>Q6A163</id>
    </interactant>
    <interactant intactId="EBI-740220">
        <id>O14964</id>
        <label>HGS</label>
    </interactant>
    <organismsDiffer>false</organismsDiffer>
    <experiments>3</experiments>
</comment>
<comment type="interaction">
    <interactant intactId="EBI-11958242">
        <id>Q6A163</id>
    </interactant>
    <interactant intactId="EBI-11955401">
        <id>Q86VF2-5</id>
        <label>IGFN1</label>
    </interactant>
    <organismsDiffer>false</organismsDiffer>
    <experiments>3</experiments>
</comment>
<comment type="interaction">
    <interactant intactId="EBI-11958242">
        <id>Q6A163</id>
    </interactant>
    <interactant intactId="EBI-710124">
        <id>O60341</id>
        <label>KDM1A</label>
    </interactant>
    <organismsDiffer>false</organismsDiffer>
    <experiments>3</experiments>
</comment>
<comment type="interaction">
    <interactant intactId="EBI-11958242">
        <id>Q6A163</id>
    </interactant>
    <interactant intactId="EBI-6426443">
        <id>Q2WGJ6</id>
        <label>KLHL38</label>
    </interactant>
    <organismsDiffer>false</organismsDiffer>
    <experiments>3</experiments>
</comment>
<comment type="interaction">
    <interactant intactId="EBI-11958242">
        <id>Q6A163</id>
    </interactant>
    <interactant intactId="EBI-298429">
        <id>P04264</id>
        <label>KRT1</label>
    </interactant>
    <organismsDiffer>false</organismsDiffer>
    <experiments>3</experiments>
</comment>
<comment type="interaction">
    <interactant intactId="EBI-11958242">
        <id>Q6A163</id>
    </interactant>
    <interactant intactId="EBI-2430095">
        <id>P12035</id>
        <label>KRT3</label>
    </interactant>
    <organismsDiffer>false</organismsDiffer>
    <experiments>3</experiments>
</comment>
<comment type="interaction">
    <interactant intactId="EBI-11958242">
        <id>Q6A163</id>
    </interactant>
    <interactant intactId="EBI-740907">
        <id>P04259</id>
        <label>KRT6B</label>
    </interactant>
    <organismsDiffer>false</organismsDiffer>
    <experiments>3</experiments>
</comment>
<comment type="interaction">
    <interactant intactId="EBI-11958242">
        <id>Q6A163</id>
    </interactant>
    <interactant intactId="EBI-968660">
        <id>Q7RTS7</id>
        <label>KRT74</label>
    </interactant>
    <organismsDiffer>false</organismsDiffer>
    <experiments>3</experiments>
</comment>
<comment type="interaction">
    <interactant intactId="EBI-11958242">
        <id>Q6A163</id>
    </interactant>
    <interactant intactId="EBI-2952745">
        <id>Q01546</id>
        <label>KRT76</label>
    </interactant>
    <organismsDiffer>false</organismsDiffer>
    <experiments>3</experiments>
</comment>
<comment type="interaction">
    <interactant intactId="EBI-11958242">
        <id>Q6A163</id>
    </interactant>
    <interactant intactId="EBI-1056564">
        <id>Q8N1N4</id>
        <label>KRT78</label>
    </interactant>
    <organismsDiffer>false</organismsDiffer>
    <experiments>3</experiments>
</comment>
<comment type="interaction">
    <interactant intactId="EBI-11958242">
        <id>Q6A163</id>
    </interactant>
    <interactant intactId="EBI-739648">
        <id>Q14533</id>
        <label>KRT81</label>
    </interactant>
    <organismsDiffer>false</organismsDiffer>
    <experiments>3</experiments>
</comment>
<comment type="interaction">
    <interactant intactId="EBI-11958242">
        <id>Q6A163</id>
    </interactant>
    <interactant intactId="EBI-10221390">
        <id>P78385</id>
        <label>KRT83</label>
    </interactant>
    <organismsDiffer>false</organismsDiffer>
    <experiments>3</experiments>
</comment>
<comment type="interaction">
    <interactant intactId="EBI-11958242">
        <id>Q6A163</id>
    </interactant>
    <interactant intactId="EBI-1049371">
        <id>P78386</id>
        <label>KRT85</label>
    </interactant>
    <organismsDiffer>false</organismsDiffer>
    <experiments>3</experiments>
</comment>
<comment type="interaction">
    <interactant intactId="EBI-11958242">
        <id>Q6A163</id>
    </interactant>
    <interactant intactId="EBI-9996498">
        <id>O43790</id>
        <label>KRT86</label>
    </interactant>
    <organismsDiffer>false</organismsDiffer>
    <experiments>5</experiments>
</comment>
<comment type="interaction">
    <interactant intactId="EBI-11958242">
        <id>Q6A163</id>
    </interactant>
    <interactant intactId="EBI-2798728">
        <id>P61968</id>
        <label>LMO4</label>
    </interactant>
    <organismsDiffer>false</organismsDiffer>
    <experiments>3</experiments>
</comment>
<comment type="interaction">
    <interactant intactId="EBI-11958242">
        <id>Q6A163</id>
    </interactant>
    <interactant intactId="EBI-368321">
        <id>O60437</id>
        <label>PPL</label>
    </interactant>
    <organismsDiffer>false</organismsDiffer>
    <experiments>4</experiments>
</comment>
<comment type="interaction">
    <interactant intactId="EBI-11958242">
        <id>Q6A163</id>
    </interactant>
    <interactant intactId="EBI-2798416">
        <id>Q99633</id>
        <label>PRPF18</label>
    </interactant>
    <organismsDiffer>false</organismsDiffer>
    <experiments>3</experiments>
</comment>
<comment type="interaction">
    <interactant intactId="EBI-11958242">
        <id>Q6A163</id>
    </interactant>
    <interactant intactId="EBI-748391">
        <id>Q9BWG6</id>
        <label>SCNM1</label>
    </interactant>
    <organismsDiffer>false</organismsDiffer>
    <experiments>3</experiments>
</comment>
<comment type="interaction">
    <interactant intactId="EBI-11958242">
        <id>Q6A163</id>
    </interactant>
    <interactant intactId="EBI-79084">
        <id>Q92529</id>
        <label>SHC3</label>
    </interactant>
    <organismsDiffer>false</organismsDiffer>
    <experiments>3</experiments>
</comment>
<comment type="interaction">
    <interactant intactId="EBI-11958242">
        <id>Q6A163</id>
    </interactant>
    <interactant intactId="EBI-455078">
        <id>Q969G3</id>
        <label>SMARCE1</label>
    </interactant>
    <organismsDiffer>false</organismsDiffer>
    <experiments>3</experiments>
</comment>
<comment type="interaction">
    <interactant intactId="EBI-11958242">
        <id>Q6A163</id>
    </interactant>
    <interactant intactId="EBI-12029034">
        <id>Q96PF1</id>
        <label>TGM7</label>
    </interactant>
    <organismsDiffer>false</organismsDiffer>
    <experiments>3</experiments>
</comment>
<comment type="interaction">
    <interactant intactId="EBI-11958242">
        <id>Q6A163</id>
    </interactant>
    <interactant intactId="EBI-6116822">
        <id>Q8N3L3</id>
        <label>TXLNB</label>
    </interactant>
    <organismsDiffer>false</organismsDiffer>
    <experiments>3</experiments>
</comment>
<comment type="interaction">
    <interactant intactId="EBI-11958242">
        <id>Q6A163</id>
    </interactant>
    <interactant intactId="EBI-7353612">
        <id>P57075-2</id>
        <label>UBASH3A</label>
    </interactant>
    <organismsDiffer>false</organismsDiffer>
    <experiments>5</experiments>
</comment>
<comment type="interaction">
    <interactant intactId="EBI-11958242">
        <id>Q6A163</id>
    </interactant>
    <interactant intactId="EBI-9031083">
        <id>Q9Y2B5</id>
        <label>VPS9D1</label>
    </interactant>
    <organismsDiffer>false</organismsDiffer>
    <experiments>3</experiments>
</comment>
<comment type="interaction">
    <interactant intactId="EBI-11958242">
        <id>Q6A163</id>
    </interactant>
    <interactant intactId="EBI-740727">
        <id>Q8TAU3</id>
        <label>ZNF417</label>
    </interactant>
    <organismsDiffer>false</organismsDiffer>
    <experiments>3</experiments>
</comment>
<comment type="interaction">
    <interactant intactId="EBI-11958242">
        <id>Q6A163</id>
    </interactant>
    <interactant intactId="EBI-25492395">
        <id>PRO_0000449633</id>
        <label>rep</label>
        <dbReference type="UniProtKB" id="P0DTD1"/>
    </interactant>
    <organismsDiffer>true</organismsDiffer>
    <experiments>3</experiments>
</comment>
<comment type="tissue specificity">
    <text evidence="3 4">Expressed in skin and scalp. In the hair follicle, it is present in the upper hair cuticle and the upper cortex. Also present in the in the upper portion of beard hairs (at protein level).</text>
</comment>
<comment type="developmental stage">
    <text evidence="4">During differentiation of the hair, it is one of the last keratins expressed.</text>
</comment>
<comment type="miscellaneous">
    <text>There are two types of cytoskeletal and microfibrillar keratin, I (acidic) and II (neutral to basic) (40-55 and 56-70 kDa, respectively).</text>
</comment>
<comment type="similarity">
    <text evidence="1">Belongs to the intermediate filament family.</text>
</comment>
<evidence type="ECO:0000255" key="1">
    <source>
        <dbReference type="PROSITE-ProRule" id="PRU01188"/>
    </source>
</evidence>
<evidence type="ECO:0000269" key="2">
    <source>
    </source>
</evidence>
<evidence type="ECO:0000269" key="3">
    <source>
    </source>
</evidence>
<evidence type="ECO:0000269" key="4">
    <source>
    </source>
</evidence>
<feature type="chain" id="PRO_0000314853" description="Keratin, type I cytoskeletal 39">
    <location>
        <begin position="1"/>
        <end position="491"/>
    </location>
</feature>
<feature type="domain" description="IF rod" evidence="1">
    <location>
        <begin position="96"/>
        <end position="407"/>
    </location>
</feature>
<feature type="region of interest" description="Head">
    <location>
        <begin position="1"/>
        <end position="96"/>
    </location>
</feature>
<feature type="region of interest" description="Coil 1A">
    <location>
        <begin position="97"/>
        <end position="131"/>
    </location>
</feature>
<feature type="region of interest" description="Linker 1">
    <location>
        <begin position="132"/>
        <end position="142"/>
    </location>
</feature>
<feature type="region of interest" description="Coil 1B">
    <location>
        <begin position="143"/>
        <end position="243"/>
    </location>
</feature>
<feature type="region of interest" description="Linker 12">
    <location>
        <begin position="244"/>
        <end position="259"/>
    </location>
</feature>
<feature type="region of interest" description="Coil 2">
    <location>
        <begin position="260"/>
        <end position="403"/>
    </location>
</feature>
<feature type="region of interest" description="Tail">
    <location>
        <begin position="404"/>
        <end position="491"/>
    </location>
</feature>
<feature type="site" description="Stutter">
    <location>
        <position position="345"/>
    </location>
</feature>
<feature type="sequence variant" id="VAR_038075" description="In dbSNP:rs17843021.">
    <original>T</original>
    <variation>M</variation>
    <location>
        <position position="341"/>
    </location>
</feature>
<feature type="sequence variant" id="VAR_038076" description="In dbSNP:rs17843023.">
    <original>L</original>
    <variation>M</variation>
    <location>
        <position position="383"/>
    </location>
</feature>
<feature type="sequence variant" id="VAR_038077" description="In dbSNP:rs7213256." evidence="2 3">
    <original>R</original>
    <variation>Q</variation>
    <location>
        <position position="456"/>
    </location>
</feature>
<accession>Q6A163</accession>
<accession>B2RXK6</accession>
<accession>Q6IFU6</accession>
<protein>
    <recommendedName>
        <fullName>Keratin, type I cytoskeletal 39</fullName>
    </recommendedName>
    <alternativeName>
        <fullName>Cytokeratin-39</fullName>
        <shortName>CK-39</shortName>
    </alternativeName>
    <alternativeName>
        <fullName>Keratin-39</fullName>
        <shortName>K39</shortName>
    </alternativeName>
    <alternativeName>
        <fullName>Type I hair keratin Ka35</fullName>
    </alternativeName>
</protein>
<proteinExistence type="evidence at protein level"/>
<organism>
    <name type="scientific">Homo sapiens</name>
    <name type="common">Human</name>
    <dbReference type="NCBI Taxonomy" id="9606"/>
    <lineage>
        <taxon>Eukaryota</taxon>
        <taxon>Metazoa</taxon>
        <taxon>Chordata</taxon>
        <taxon>Craniata</taxon>
        <taxon>Vertebrata</taxon>
        <taxon>Euteleostomi</taxon>
        <taxon>Mammalia</taxon>
        <taxon>Eutheria</taxon>
        <taxon>Euarchontoglires</taxon>
        <taxon>Primates</taxon>
        <taxon>Haplorrhini</taxon>
        <taxon>Catarrhini</taxon>
        <taxon>Hominidae</taxon>
        <taxon>Homo</taxon>
    </lineage>
</organism>
<gene>
    <name type="primary">KRT39</name>
    <name type="synonym">KA35</name>
</gene>
<name>K1C39_HUMAN</name>